<comment type="function">
    <text evidence="3">Regulatory subunit of the blood coagulation factor X-activating enzyme. Activates coagulation factor X (F10) by cleaving the Arg-Ile bond at position 234, activates coagulation factor IX (F9) by cleaving the Arg-Val bond at position 226 and is also able to activate protein C (PROC). May serve as an exosite by which the enzyme recognizes and binds to the Gla domain of factor X (F10) in a calcium-dependent manner.</text>
</comment>
<comment type="subunit">
    <text evidence="3 4">Heterotrimer; disulfide-linked. The heterotrimer consists of 1 heavy chain (a metalloproteinase) and 2 light chains: LC1 and LC2.</text>
</comment>
<comment type="subcellular location">
    <subcellularLocation>
        <location>Secreted</location>
    </subcellularLocation>
</comment>
<comment type="tissue specificity">
    <text>Expressed by the venom gland.</text>
</comment>
<comment type="miscellaneous">
    <text evidence="1">Calcium is required for ligand binding.</text>
</comment>
<comment type="similarity">
    <text evidence="5">Belongs to the snaclec family.</text>
</comment>
<keyword id="KW-1204">Blood coagulation cascade activating toxin</keyword>
<keyword id="KW-0106">Calcium</keyword>
<keyword id="KW-0903">Direct protein sequencing</keyword>
<keyword id="KW-1015">Disulfide bond</keyword>
<keyword id="KW-1199">Hemostasis impairing toxin</keyword>
<keyword id="KW-0479">Metal-binding</keyword>
<keyword id="KW-0964">Secreted</keyword>
<keyword id="KW-0732">Signal</keyword>
<keyword id="KW-0800">Toxin</keyword>
<feature type="signal peptide" evidence="4">
    <location>
        <begin position="1"/>
        <end position="23"/>
    </location>
</feature>
<feature type="chain" id="PRO_0000017536" description="Snaclec coagulation factor X-activating enzyme light chain 2">
    <location>
        <begin position="24"/>
        <end position="158"/>
    </location>
</feature>
<feature type="domain" description="C-type lectin" evidence="2">
    <location>
        <begin position="34"/>
        <end position="153"/>
    </location>
</feature>
<feature type="disulfide bond" evidence="2">
    <location>
        <begin position="27"/>
        <end position="38"/>
    </location>
</feature>
<feature type="disulfide bond" evidence="2">
    <location>
        <begin position="55"/>
        <end position="152"/>
    </location>
</feature>
<feature type="disulfide bond" description="Interchain (with C-100 in coagulation factor X-activating enzyme light chain LC1)" evidence="2">
    <location>
        <position position="104"/>
    </location>
</feature>
<feature type="disulfide bond" evidence="2">
    <location>
        <begin position="127"/>
        <end position="144"/>
    </location>
</feature>
<feature type="disulfide bond" description="Interchain (with C-579 in coagulation factor X-activating enzyme heavy chain)" evidence="2">
    <location>
        <position position="158"/>
    </location>
</feature>
<sequence>MGRSISVSFGLLAVFLSLSGTGAGLDCPPDSSPYRYFCYRVFKEQKNWADAERFCAERPNNGHLVSIESMEEAEFVAQLLSKITGKFITHFWIGLRIEDKKQQCRSEWSDGSSVSYDNLLKREFRKCFGLEKGTGYRSWFNLNCEEPYPFVCKVPPNC</sequence>
<accession>Q696W1</accession>
<reference key="1">
    <citation type="journal article" date="2004" name="Biochim. Biophys. Acta">
        <title>Factor X activator from Vipera lebetina venom is synthesized from different genes.</title>
        <authorList>
            <person name="Siigur E."/>
            <person name="Aaspollu A."/>
            <person name="Trummal K."/>
            <person name="Tonismaegi K."/>
            <person name="Tammiste I."/>
            <person name="Kalkkinen N."/>
            <person name="Siigur J."/>
        </authorList>
    </citation>
    <scope>NUCLEOTIDE SEQUENCE [MRNA]</scope>
    <scope>PROTEIN SEQUENCE OF 24-35</scope>
    <scope>SUBUNIT</scope>
    <source>
        <tissue>Venom</tissue>
        <tissue>Venom gland</tissue>
    </source>
</reference>
<reference key="2">
    <citation type="journal article" date="2001" name="Biochim. Biophys. Acta">
        <title>Factor X activator from Vipera lebetina snake venom, molecular characterization and substrate specificity.</title>
        <authorList>
            <person name="Siigur E."/>
            <person name="Tonismagi K."/>
            <person name="Trummal K."/>
            <person name="Samel M."/>
            <person name="Vija H."/>
            <person name="Subbi J."/>
            <person name="Siigur J."/>
        </authorList>
    </citation>
    <scope>FUNCTION</scope>
    <scope>SUBUNIT</scope>
    <scope>GLYCOSYLATION</scope>
    <source>
        <tissue>Venom</tissue>
    </source>
</reference>
<proteinExistence type="evidence at protein level"/>
<dbReference type="EMBL" id="AY578116">
    <property type="protein sequence ID" value="AAT91068.1"/>
    <property type="molecule type" value="mRNA"/>
</dbReference>
<dbReference type="SMR" id="Q696W1"/>
<dbReference type="GO" id="GO:0005576">
    <property type="term" value="C:extracellular region"/>
    <property type="evidence" value="ECO:0007669"/>
    <property type="project" value="UniProtKB-SubCell"/>
</dbReference>
<dbReference type="GO" id="GO:0046872">
    <property type="term" value="F:metal ion binding"/>
    <property type="evidence" value="ECO:0007669"/>
    <property type="project" value="UniProtKB-KW"/>
</dbReference>
<dbReference type="GO" id="GO:0090729">
    <property type="term" value="F:toxin activity"/>
    <property type="evidence" value="ECO:0007669"/>
    <property type="project" value="UniProtKB-KW"/>
</dbReference>
<dbReference type="FunFam" id="3.10.100.10:FF:000087">
    <property type="entry name" value="Snaclec rhodocetin subunit delta"/>
    <property type="match status" value="1"/>
</dbReference>
<dbReference type="Gene3D" id="3.10.100.10">
    <property type="entry name" value="Mannose-Binding Protein A, subunit A"/>
    <property type="match status" value="1"/>
</dbReference>
<dbReference type="InterPro" id="IPR001304">
    <property type="entry name" value="C-type_lectin-like"/>
</dbReference>
<dbReference type="InterPro" id="IPR016186">
    <property type="entry name" value="C-type_lectin-like/link_sf"/>
</dbReference>
<dbReference type="InterPro" id="IPR050111">
    <property type="entry name" value="C-type_lectin/snaclec_domain"/>
</dbReference>
<dbReference type="InterPro" id="IPR018378">
    <property type="entry name" value="C-type_lectin_CS"/>
</dbReference>
<dbReference type="InterPro" id="IPR016187">
    <property type="entry name" value="CTDL_fold"/>
</dbReference>
<dbReference type="PANTHER" id="PTHR22803">
    <property type="entry name" value="MANNOSE, PHOSPHOLIPASE, LECTIN RECEPTOR RELATED"/>
    <property type="match status" value="1"/>
</dbReference>
<dbReference type="Pfam" id="PF00059">
    <property type="entry name" value="Lectin_C"/>
    <property type="match status" value="1"/>
</dbReference>
<dbReference type="PRINTS" id="PR01504">
    <property type="entry name" value="PNCREATITSAP"/>
</dbReference>
<dbReference type="SMART" id="SM00034">
    <property type="entry name" value="CLECT"/>
    <property type="match status" value="1"/>
</dbReference>
<dbReference type="SUPFAM" id="SSF56436">
    <property type="entry name" value="C-type lectin-like"/>
    <property type="match status" value="1"/>
</dbReference>
<dbReference type="PROSITE" id="PS00615">
    <property type="entry name" value="C_TYPE_LECTIN_1"/>
    <property type="match status" value="1"/>
</dbReference>
<dbReference type="PROSITE" id="PS50041">
    <property type="entry name" value="C_TYPE_LECTIN_2"/>
    <property type="match status" value="1"/>
</dbReference>
<gene>
    <name type="primary">LC2</name>
</gene>
<protein>
    <recommendedName>
        <fullName>Snaclec coagulation factor X-activating enzyme light chain 2</fullName>
    </recommendedName>
    <alternativeName>
        <fullName>VL factor X activator light chain 2</fullName>
        <shortName>VLFXA light chain 2</shortName>
    </alternativeName>
</protein>
<name>SLLC2_MACLB</name>
<evidence type="ECO:0000250" key="1"/>
<evidence type="ECO:0000255" key="2">
    <source>
        <dbReference type="PROSITE-ProRule" id="PRU00040"/>
    </source>
</evidence>
<evidence type="ECO:0000269" key="3">
    <source>
    </source>
</evidence>
<evidence type="ECO:0000269" key="4">
    <source>
    </source>
</evidence>
<evidence type="ECO:0000305" key="5"/>
<organism>
    <name type="scientific">Macrovipera lebetinus</name>
    <name type="common">Levantine viper</name>
    <name type="synonym">Vipera lebetina</name>
    <dbReference type="NCBI Taxonomy" id="3148341"/>
    <lineage>
        <taxon>Eukaryota</taxon>
        <taxon>Metazoa</taxon>
        <taxon>Chordata</taxon>
        <taxon>Craniata</taxon>
        <taxon>Vertebrata</taxon>
        <taxon>Euteleostomi</taxon>
        <taxon>Lepidosauria</taxon>
        <taxon>Squamata</taxon>
        <taxon>Bifurcata</taxon>
        <taxon>Unidentata</taxon>
        <taxon>Episquamata</taxon>
        <taxon>Toxicofera</taxon>
        <taxon>Serpentes</taxon>
        <taxon>Colubroidea</taxon>
        <taxon>Viperidae</taxon>
        <taxon>Viperinae</taxon>
        <taxon>Macrovipera</taxon>
    </lineage>
</organism>